<sequence>MPRGDSEQVRYCARFSYLWLKFSLVIYSTVFWLIGGLVLSVGIYAEVERQKYKTLESAFLAPAIILILLGVVMFIVSFIGVLASLRDNLCLLQAFMYILGICLIIELIGGVVALIFRNQTIDFLNDNIRRGIENYYDDLDFKNIMDFVQKEFKCCGGEDYRDWSKNQYHDCRAPGPLACGVPYTCCFRNTTEVVNTMCGYKTIDKERLSVQNVIYVRGCTNAVLMWFTDNYTIMAGVLLGILLPQFLGVLLTFLYITRVEDIITEHSVTDGLLGPGTKAGVEAAGTGCCMCYPI</sequence>
<name>TSN15_BOVIN</name>
<proteinExistence type="evidence at protein level"/>
<protein>
    <recommendedName>
        <fullName>Tetraspanin-15</fullName>
        <shortName>Tspan-15</shortName>
    </recommendedName>
</protein>
<comment type="function">
    <text evidence="1 2">Part of TspanC8 subgroup, composed of 6 members that interact with the transmembrane metalloprotease ADAM10. This interaction is required for ADAM10 exit from the endoplasmic reticulum and for enzymatic maturation and trafficking to the cell surface as well as substrate specificity. Different TspanC8/ADAM10 complexes have distinct substrates (By similarity). Promotes ADAM10-mediated cleavage of CDH2 (By similarity). Negatively regulates ligand-induced Notch activity probably by regulating ADAM10 activity (By similarity).</text>
</comment>
<comment type="subunit">
    <text evidence="4">Interacts with ADAM10; the interaction influences ADAM10 substrate specificity, endocytosis and turnover.</text>
</comment>
<comment type="subcellular location">
    <subcellularLocation>
        <location evidence="2">Cell membrane</location>
        <topology evidence="5">Multi-pass membrane protein</topology>
    </subcellularLocation>
    <subcellularLocation>
        <location evidence="2">Late endosome membrane</location>
    </subcellularLocation>
</comment>
<comment type="PTM">
    <text evidence="2">Palmitoylated.</text>
</comment>
<comment type="similarity">
    <text evidence="5">Belongs to the tetraspanin (TM4SF) family.</text>
</comment>
<dbReference type="EMBL" id="BC116110">
    <property type="protein sequence ID" value="AAI16111.1"/>
    <property type="molecule type" value="mRNA"/>
</dbReference>
<dbReference type="RefSeq" id="NP_001069297.1">
    <property type="nucleotide sequence ID" value="NM_001075829.1"/>
</dbReference>
<dbReference type="SMR" id="Q1JQA4"/>
<dbReference type="FunCoup" id="Q1JQA4">
    <property type="interactions" value="96"/>
</dbReference>
<dbReference type="STRING" id="9913.ENSBTAP00000063927"/>
<dbReference type="GlyCosmos" id="Q1JQA4">
    <property type="glycosylation" value="3 sites, No reported glycans"/>
</dbReference>
<dbReference type="GlyGen" id="Q1JQA4">
    <property type="glycosylation" value="3 sites"/>
</dbReference>
<dbReference type="PaxDb" id="9913-ENSBTAP00000031290"/>
<dbReference type="GeneID" id="522371"/>
<dbReference type="KEGG" id="bta:522371"/>
<dbReference type="CTD" id="23555"/>
<dbReference type="VEuPathDB" id="HostDB:ENSBTAG00000000224"/>
<dbReference type="eggNOG" id="KOG3882">
    <property type="taxonomic scope" value="Eukaryota"/>
</dbReference>
<dbReference type="HOGENOM" id="CLU_055524_0_1_1"/>
<dbReference type="InParanoid" id="Q1JQA4"/>
<dbReference type="OMA" id="FAGAGCC"/>
<dbReference type="OrthoDB" id="10051815at2759"/>
<dbReference type="TreeFam" id="TF313002"/>
<dbReference type="Proteomes" id="UP000009136">
    <property type="component" value="Chromosome 28"/>
</dbReference>
<dbReference type="Bgee" id="ENSBTAG00000000224">
    <property type="expression patterns" value="Expressed in abomasum and 106 other cell types or tissues"/>
</dbReference>
<dbReference type="GO" id="GO:0031902">
    <property type="term" value="C:late endosome membrane"/>
    <property type="evidence" value="ECO:0007669"/>
    <property type="project" value="UniProtKB-SubCell"/>
</dbReference>
<dbReference type="GO" id="GO:0005886">
    <property type="term" value="C:plasma membrane"/>
    <property type="evidence" value="ECO:0000250"/>
    <property type="project" value="UniProtKB"/>
</dbReference>
<dbReference type="GO" id="GO:0051604">
    <property type="term" value="P:protein maturation"/>
    <property type="evidence" value="ECO:0000250"/>
    <property type="project" value="UniProtKB"/>
</dbReference>
<dbReference type="GO" id="GO:0051043">
    <property type="term" value="P:regulation of membrane protein ectodomain proteolysis"/>
    <property type="evidence" value="ECO:0000250"/>
    <property type="project" value="UniProtKB"/>
</dbReference>
<dbReference type="CDD" id="cd03158">
    <property type="entry name" value="penumbra_like_LEL"/>
    <property type="match status" value="1"/>
</dbReference>
<dbReference type="FunFam" id="1.10.1450.10:FF:000011">
    <property type="entry name" value="Tetraspanin"/>
    <property type="match status" value="1"/>
</dbReference>
<dbReference type="Gene3D" id="1.10.1450.10">
    <property type="entry name" value="Tetraspanin"/>
    <property type="match status" value="1"/>
</dbReference>
<dbReference type="InterPro" id="IPR018499">
    <property type="entry name" value="Tetraspanin/Peripherin"/>
</dbReference>
<dbReference type="InterPro" id="IPR000301">
    <property type="entry name" value="Tetraspanin_animals"/>
</dbReference>
<dbReference type="InterPro" id="IPR008952">
    <property type="entry name" value="Tetraspanin_EC2_sf"/>
</dbReference>
<dbReference type="PANTHER" id="PTHR19282">
    <property type="entry name" value="TETRASPANIN"/>
    <property type="match status" value="1"/>
</dbReference>
<dbReference type="PANTHER" id="PTHR19282:SF159">
    <property type="entry name" value="TETRASPANIN-15"/>
    <property type="match status" value="1"/>
</dbReference>
<dbReference type="Pfam" id="PF00335">
    <property type="entry name" value="Tetraspanin"/>
    <property type="match status" value="1"/>
</dbReference>
<dbReference type="PIRSF" id="PIRSF002419">
    <property type="entry name" value="Tetraspanin"/>
    <property type="match status" value="1"/>
</dbReference>
<dbReference type="PRINTS" id="PR00259">
    <property type="entry name" value="TMFOUR"/>
</dbReference>
<dbReference type="SUPFAM" id="SSF48652">
    <property type="entry name" value="Tetraspanin"/>
    <property type="match status" value="1"/>
</dbReference>
<accession>Q1JQA4</accession>
<feature type="chain" id="PRO_0000284966" description="Tetraspanin-15">
    <location>
        <begin position="1"/>
        <end position="294"/>
    </location>
</feature>
<feature type="topological domain" description="Cytoplasmic" evidence="3">
    <location>
        <begin position="1"/>
        <end position="23"/>
    </location>
</feature>
<feature type="transmembrane region" description="Helical" evidence="3">
    <location>
        <begin position="24"/>
        <end position="44"/>
    </location>
</feature>
<feature type="topological domain" description="Extracellular" evidence="3">
    <location>
        <begin position="45"/>
        <end position="62"/>
    </location>
</feature>
<feature type="transmembrane region" description="Helical" evidence="3">
    <location>
        <begin position="63"/>
        <end position="83"/>
    </location>
</feature>
<feature type="topological domain" description="Cytoplasmic" evidence="3">
    <location>
        <begin position="84"/>
        <end position="93"/>
    </location>
</feature>
<feature type="transmembrane region" description="Helical" evidence="3">
    <location>
        <begin position="94"/>
        <end position="114"/>
    </location>
</feature>
<feature type="topological domain" description="Extracellular" evidence="3">
    <location>
        <begin position="115"/>
        <end position="235"/>
    </location>
</feature>
<feature type="transmembrane region" description="Helical" evidence="3">
    <location>
        <begin position="236"/>
        <end position="256"/>
    </location>
</feature>
<feature type="topological domain" description="Cytoplasmic" evidence="3">
    <location>
        <begin position="257"/>
        <end position="294"/>
    </location>
</feature>
<feature type="glycosylation site" description="N-linked (GlcNAc...) asparagine" evidence="3">
    <location>
        <position position="118"/>
    </location>
</feature>
<feature type="glycosylation site" description="N-linked (GlcNAc...) asparagine" evidence="2 3">
    <location>
        <position position="189"/>
    </location>
</feature>
<feature type="glycosylation site" description="N-linked (GlcNAc...) asparagine" evidence="3">
    <location>
        <position position="230"/>
    </location>
</feature>
<feature type="disulfide bond" evidence="2">
    <location>
        <begin position="154"/>
        <end position="219"/>
    </location>
</feature>
<feature type="disulfide bond" evidence="2">
    <location>
        <begin position="155"/>
        <end position="185"/>
    </location>
</feature>
<feature type="disulfide bond" evidence="2">
    <location>
        <begin position="171"/>
        <end position="179"/>
    </location>
</feature>
<feature type="disulfide bond" evidence="2">
    <location>
        <begin position="186"/>
        <end position="198"/>
    </location>
</feature>
<reference key="1">
    <citation type="submission" date="2006-05" db="EMBL/GenBank/DDBJ databases">
        <authorList>
            <consortium name="NIH - Mammalian Gene Collection (MGC) project"/>
        </authorList>
    </citation>
    <scope>NUCLEOTIDE SEQUENCE [LARGE SCALE MRNA]</scope>
    <source>
        <strain>Hereford</strain>
        <tissue>Hippocampus</tissue>
    </source>
</reference>
<reference key="2">
    <citation type="journal article" date="2012" name="J. Biol. Chem.">
        <title>The TspanC8 subgroup of tetraspanins interacts with A disintegrin and metalloprotease 10 (ADAM10) and regulates its maturation and cell surface expression.</title>
        <authorList>
            <person name="Haining E.J."/>
            <person name="Yang J."/>
            <person name="Bailey R.L."/>
            <person name="Khan K."/>
            <person name="Collier R."/>
            <person name="Tsai S."/>
            <person name="Watson S.P."/>
            <person name="Frampton J."/>
            <person name="Garcia P."/>
            <person name="Tomlinson M.G."/>
        </authorList>
    </citation>
    <scope>INTERACTION WITH ADAM10</scope>
</reference>
<gene>
    <name type="primary">TSPAN15</name>
</gene>
<keyword id="KW-1003">Cell membrane</keyword>
<keyword id="KW-1015">Disulfide bond</keyword>
<keyword id="KW-0967">Endosome</keyword>
<keyword id="KW-0325">Glycoprotein</keyword>
<keyword id="KW-0472">Membrane</keyword>
<keyword id="KW-1185">Reference proteome</keyword>
<keyword id="KW-0812">Transmembrane</keyword>
<keyword id="KW-1133">Transmembrane helix</keyword>
<organism>
    <name type="scientific">Bos taurus</name>
    <name type="common">Bovine</name>
    <dbReference type="NCBI Taxonomy" id="9913"/>
    <lineage>
        <taxon>Eukaryota</taxon>
        <taxon>Metazoa</taxon>
        <taxon>Chordata</taxon>
        <taxon>Craniata</taxon>
        <taxon>Vertebrata</taxon>
        <taxon>Euteleostomi</taxon>
        <taxon>Mammalia</taxon>
        <taxon>Eutheria</taxon>
        <taxon>Laurasiatheria</taxon>
        <taxon>Artiodactyla</taxon>
        <taxon>Ruminantia</taxon>
        <taxon>Pecora</taxon>
        <taxon>Bovidae</taxon>
        <taxon>Bovinae</taxon>
        <taxon>Bos</taxon>
    </lineage>
</organism>
<evidence type="ECO:0000250" key="1">
    <source>
        <dbReference type="UniProtKB" id="F7BWT7"/>
    </source>
</evidence>
<evidence type="ECO:0000250" key="2">
    <source>
        <dbReference type="UniProtKB" id="O95858"/>
    </source>
</evidence>
<evidence type="ECO:0000255" key="3"/>
<evidence type="ECO:0000269" key="4">
    <source>
    </source>
</evidence>
<evidence type="ECO:0000305" key="5"/>